<keyword id="KW-0687">Ribonucleoprotein</keyword>
<keyword id="KW-0689">Ribosomal protein</keyword>
<protein>
    <recommendedName>
        <fullName evidence="1">Large ribosomal subunit protein bL12</fullName>
    </recommendedName>
    <alternativeName>
        <fullName evidence="2">50S ribosomal protein L7/L12</fullName>
    </alternativeName>
</protein>
<sequence>MSITNEQILDAIAEMSVTQVVELISAMEEKFGVTAAAAVVAGGAAAGAAVEEQTEFNVILASAGANKVAVIKAVRGATGLGLKEAKALVDGAPAALKEGVEKAEAEALKKELEEAGATVEIK</sequence>
<organism>
    <name type="scientific">Vibrio vulnificus (strain YJ016)</name>
    <dbReference type="NCBI Taxonomy" id="196600"/>
    <lineage>
        <taxon>Bacteria</taxon>
        <taxon>Pseudomonadati</taxon>
        <taxon>Pseudomonadota</taxon>
        <taxon>Gammaproteobacteria</taxon>
        <taxon>Vibrionales</taxon>
        <taxon>Vibrionaceae</taxon>
        <taxon>Vibrio</taxon>
    </lineage>
</organism>
<reference key="1">
    <citation type="journal article" date="2003" name="Genome Res.">
        <title>Comparative genome analysis of Vibrio vulnificus, a marine pathogen.</title>
        <authorList>
            <person name="Chen C.-Y."/>
            <person name="Wu K.-M."/>
            <person name="Chang Y.-C."/>
            <person name="Chang C.-H."/>
            <person name="Tsai H.-C."/>
            <person name="Liao T.-L."/>
            <person name="Liu Y.-M."/>
            <person name="Chen H.-J."/>
            <person name="Shen A.B.-T."/>
            <person name="Li J.-C."/>
            <person name="Su T.-L."/>
            <person name="Shao C.-P."/>
            <person name="Lee C.-T."/>
            <person name="Hor L.-I."/>
            <person name="Tsai S.-F."/>
        </authorList>
    </citation>
    <scope>NUCLEOTIDE SEQUENCE [LARGE SCALE GENOMIC DNA]</scope>
    <source>
        <strain>YJ016</strain>
    </source>
</reference>
<comment type="function">
    <text evidence="1">Forms part of the ribosomal stalk which helps the ribosome interact with GTP-bound translation factors. Is thus essential for accurate translation.</text>
</comment>
<comment type="subunit">
    <text evidence="1">Homodimer. Part of the ribosomal stalk of the 50S ribosomal subunit. Forms a multimeric L10(L12)X complex, where L10 forms an elongated spine to which 2 to 4 L12 dimers bind in a sequential fashion. Binds GTP-bound translation factors.</text>
</comment>
<comment type="similarity">
    <text evidence="1">Belongs to the bacterial ribosomal protein bL12 family.</text>
</comment>
<dbReference type="EMBL" id="BA000037">
    <property type="protein sequence ID" value="BAC95924.1"/>
    <property type="molecule type" value="Genomic_DNA"/>
</dbReference>
<dbReference type="RefSeq" id="WP_011079200.1">
    <property type="nucleotide sequence ID" value="NC_005139.1"/>
</dbReference>
<dbReference type="SMR" id="Q7MGR7"/>
<dbReference type="STRING" id="672.VV93_v1c28770"/>
<dbReference type="GeneID" id="93895477"/>
<dbReference type="KEGG" id="vvy:VV3160"/>
<dbReference type="eggNOG" id="COG0222">
    <property type="taxonomic scope" value="Bacteria"/>
</dbReference>
<dbReference type="HOGENOM" id="CLU_086499_3_2_6"/>
<dbReference type="Proteomes" id="UP000002675">
    <property type="component" value="Chromosome I"/>
</dbReference>
<dbReference type="GO" id="GO:0022625">
    <property type="term" value="C:cytosolic large ribosomal subunit"/>
    <property type="evidence" value="ECO:0007669"/>
    <property type="project" value="TreeGrafter"/>
</dbReference>
<dbReference type="GO" id="GO:0003729">
    <property type="term" value="F:mRNA binding"/>
    <property type="evidence" value="ECO:0007669"/>
    <property type="project" value="TreeGrafter"/>
</dbReference>
<dbReference type="GO" id="GO:0003735">
    <property type="term" value="F:structural constituent of ribosome"/>
    <property type="evidence" value="ECO:0007669"/>
    <property type="project" value="InterPro"/>
</dbReference>
<dbReference type="GO" id="GO:0006412">
    <property type="term" value="P:translation"/>
    <property type="evidence" value="ECO:0007669"/>
    <property type="project" value="UniProtKB-UniRule"/>
</dbReference>
<dbReference type="CDD" id="cd00387">
    <property type="entry name" value="Ribosomal_L7_L12"/>
    <property type="match status" value="1"/>
</dbReference>
<dbReference type="FunFam" id="3.30.1390.10:FF:000001">
    <property type="entry name" value="50S ribosomal protein L7/L12"/>
    <property type="match status" value="1"/>
</dbReference>
<dbReference type="Gene3D" id="3.30.1390.10">
    <property type="match status" value="1"/>
</dbReference>
<dbReference type="Gene3D" id="1.20.5.710">
    <property type="entry name" value="Single helix bin"/>
    <property type="match status" value="1"/>
</dbReference>
<dbReference type="HAMAP" id="MF_00368">
    <property type="entry name" value="Ribosomal_bL12"/>
    <property type="match status" value="1"/>
</dbReference>
<dbReference type="InterPro" id="IPR000206">
    <property type="entry name" value="Ribosomal_bL12"/>
</dbReference>
<dbReference type="InterPro" id="IPR013823">
    <property type="entry name" value="Ribosomal_bL12_C"/>
</dbReference>
<dbReference type="InterPro" id="IPR014719">
    <property type="entry name" value="Ribosomal_bL12_C/ClpS-like"/>
</dbReference>
<dbReference type="InterPro" id="IPR008932">
    <property type="entry name" value="Ribosomal_bL12_oligo"/>
</dbReference>
<dbReference type="InterPro" id="IPR036235">
    <property type="entry name" value="Ribosomal_bL12_oligo_N_sf"/>
</dbReference>
<dbReference type="NCBIfam" id="TIGR00855">
    <property type="entry name" value="L12"/>
    <property type="match status" value="1"/>
</dbReference>
<dbReference type="PANTHER" id="PTHR45987">
    <property type="entry name" value="39S RIBOSOMAL PROTEIN L12"/>
    <property type="match status" value="1"/>
</dbReference>
<dbReference type="PANTHER" id="PTHR45987:SF4">
    <property type="entry name" value="LARGE RIBOSOMAL SUBUNIT PROTEIN BL12M"/>
    <property type="match status" value="1"/>
</dbReference>
<dbReference type="Pfam" id="PF00542">
    <property type="entry name" value="Ribosomal_L12"/>
    <property type="match status" value="1"/>
</dbReference>
<dbReference type="Pfam" id="PF16320">
    <property type="entry name" value="Ribosomal_L12_N"/>
    <property type="match status" value="1"/>
</dbReference>
<dbReference type="SUPFAM" id="SSF54736">
    <property type="entry name" value="ClpS-like"/>
    <property type="match status" value="1"/>
</dbReference>
<dbReference type="SUPFAM" id="SSF48300">
    <property type="entry name" value="Ribosomal protein L7/12, oligomerisation (N-terminal) domain"/>
    <property type="match status" value="1"/>
</dbReference>
<evidence type="ECO:0000255" key="1">
    <source>
        <dbReference type="HAMAP-Rule" id="MF_00368"/>
    </source>
</evidence>
<evidence type="ECO:0000305" key="2"/>
<name>RL7_VIBVY</name>
<gene>
    <name evidence="1" type="primary">rplL</name>
    <name type="ordered locus">VV3160</name>
</gene>
<proteinExistence type="inferred from homology"/>
<accession>Q7MGR7</accession>
<feature type="chain" id="PRO_0000157605" description="Large ribosomal subunit protein bL12">
    <location>
        <begin position="1"/>
        <end position="122"/>
    </location>
</feature>